<reference key="1">
    <citation type="journal article" date="2006" name="Mol. Biol. Evol.">
        <title>Molecular evolution of the primate developmental genes MSX1 and PAX9.</title>
        <authorList>
            <person name="Perry G.H."/>
            <person name="Verrelli B.C."/>
            <person name="Stone A.C."/>
        </authorList>
    </citation>
    <scope>NUCLEOTIDE SEQUENCE [GENOMIC DNA]</scope>
    <source>
        <strain>Isolate 6261</strain>
    </source>
</reference>
<comment type="function">
    <text evidence="1 2">Acts as a transcriptional repressor (By similarity). Capable of transcription autoinactivation (By similarity). Binds to the consensus sequence 5'-C/GTAAT-3' in downstream activin regulatory elements (DARE) in the gene promoter, thereby repressing the transcription of CGA/alpha-GSU and GNRHR (By similarity). Represses transcription of myoblast differentiation factors (By similarity). Binds to core enhancer regions in target gene promoters of myoblast differentiation factors with binding specificity facilitated by interaction with PIAS1 (By similarity). Regulates, in a stage-specific manner, a developmental program of gene expression in the fetal tooth bud that controls odontoblast differentiation and proliferation of dental mesenchymal cells (By similarity). At the bud stage, required for mesenchymal molar tooth bud development via facilitating reciprocal signaling between dental epithelial and mesenchymal cells (By similarity). May also regulate expression of Wnt antagonists such as DKK2 and SFPR2 in the developing tooth mesenchyme (By similarity). Required for BMP4 expression in dental mesenchyme cells (By similarity). Also, in response to BMP4, required for BMP4 expression in neighboring dental epithelial cells (By similarity). Required for maximal FGF4-induced expression of SDC1 in dental mesenchyme cells (By similarity). Also in response to SDC1, required for SDC1 expression in neighboring dental epithelial cells (By similarity). At the early bell stage, acts to drive proliferation of dental mesenchyme cells, however during the late bell stage acts as an homeostatic regulator of the cell cycle (By similarity). Regulates proliferation and inhibits premature mesenchymal odontogenesis during the bell stage via inhibition of the Wnt signaling component CTNNB1 and subsequent repression of the odontoblast differentiation factors BMP2, BMP4, LEF1, ALPL and BGLAP/OCN (By similarity). Additionally, required for correct development and fusion of the palatal shelves and embryonic mandibular formation (By similarity). Plays a role in embryonic bone formation of the middle ear, skull and nasal bones (By similarity). Required for correct formation and thickness of the nail plate (By similarity). May play a role in limb-pattern formation (By similarity).</text>
</comment>
<comment type="subunit">
    <text evidence="1">Interacts with CREBBP/CBP, TBP and SP1; interaction with these transcription activators may inhibit autoinactivation (By similarity). Interacts (via C-terminus) with PIAS1 (via N-terminus); the interaction is required for the localization of both proteins to the nuclear periphery and specific binding of MSX1 to the core enhancer region in target gene promoters (By similarity). Interacts with H1-5 (By similarity).</text>
</comment>
<comment type="subcellular location">
    <subcellularLocation>
        <location evidence="1">Nucleus</location>
    </subcellularLocation>
    <text evidence="1">Interaction with PIAS1 is required for localization to the nuclear periphery (By similarity).</text>
</comment>
<comment type="PTM">
    <text evidence="1">Sumoylated by PIAS1, desumoylated by SENP1 (By similarity). Sumoylation of Lys-15 and Lys-133 not required for interaction with H1-5, transcriptional repression, inhibition of myoblast differentiation, or binding to gene promoters (By similarity).</text>
</comment>
<comment type="similarity">
    <text evidence="5">Belongs to the Msh homeobox family.</text>
</comment>
<accession>Q2VL79</accession>
<name>MSX1_DAUMA</name>
<evidence type="ECO:0000250" key="1">
    <source>
        <dbReference type="UniProtKB" id="P13297"/>
    </source>
</evidence>
<evidence type="ECO:0000250" key="2">
    <source>
        <dbReference type="UniProtKB" id="P28360"/>
    </source>
</evidence>
<evidence type="ECO:0000255" key="3">
    <source>
        <dbReference type="PROSITE-ProRule" id="PRU00108"/>
    </source>
</evidence>
<evidence type="ECO:0000256" key="4">
    <source>
        <dbReference type="SAM" id="MobiDB-lite"/>
    </source>
</evidence>
<evidence type="ECO:0000305" key="5"/>
<gene>
    <name evidence="1" type="primary">MSX1</name>
</gene>
<dbReference type="EMBL" id="DQ067485">
    <property type="protein sequence ID" value="AAZ30472.1"/>
    <property type="molecule type" value="Genomic_DNA"/>
</dbReference>
<dbReference type="EMBL" id="DQ067484">
    <property type="protein sequence ID" value="AAZ30472.1"/>
    <property type="status" value="JOINED"/>
    <property type="molecule type" value="Genomic_DNA"/>
</dbReference>
<dbReference type="SMR" id="Q2VL79"/>
<dbReference type="OrthoDB" id="6159439at2759"/>
<dbReference type="GO" id="GO:0034399">
    <property type="term" value="C:nuclear periphery"/>
    <property type="evidence" value="ECO:0000250"/>
    <property type="project" value="UniProtKB"/>
</dbReference>
<dbReference type="GO" id="GO:0000981">
    <property type="term" value="F:DNA-binding transcription factor activity, RNA polymerase II-specific"/>
    <property type="evidence" value="ECO:0007669"/>
    <property type="project" value="InterPro"/>
</dbReference>
<dbReference type="GO" id="GO:0000977">
    <property type="term" value="F:RNA polymerase II transcription regulatory region sequence-specific DNA binding"/>
    <property type="evidence" value="ECO:0007669"/>
    <property type="project" value="TreeGrafter"/>
</dbReference>
<dbReference type="GO" id="GO:0000976">
    <property type="term" value="F:transcription cis-regulatory region binding"/>
    <property type="evidence" value="ECO:0000250"/>
    <property type="project" value="UniProtKB"/>
</dbReference>
<dbReference type="GO" id="GO:0048598">
    <property type="term" value="P:embryonic morphogenesis"/>
    <property type="evidence" value="ECO:0007669"/>
    <property type="project" value="TreeGrafter"/>
</dbReference>
<dbReference type="GO" id="GO:0048839">
    <property type="term" value="P:inner ear development"/>
    <property type="evidence" value="ECO:0000250"/>
    <property type="project" value="UniProtKB"/>
</dbReference>
<dbReference type="GO" id="GO:0010629">
    <property type="term" value="P:negative regulation of gene expression"/>
    <property type="evidence" value="ECO:0000250"/>
    <property type="project" value="UniProtKB"/>
</dbReference>
<dbReference type="GO" id="GO:1901330">
    <property type="term" value="P:negative regulation of odontoblast differentiation"/>
    <property type="evidence" value="ECO:0000250"/>
    <property type="project" value="UniProtKB"/>
</dbReference>
<dbReference type="GO" id="GO:0043584">
    <property type="term" value="P:nose development"/>
    <property type="evidence" value="ECO:0000250"/>
    <property type="project" value="UniProtKB"/>
</dbReference>
<dbReference type="GO" id="GO:0045787">
    <property type="term" value="P:positive regulation of cell cycle"/>
    <property type="evidence" value="ECO:0000250"/>
    <property type="project" value="UniProtKB"/>
</dbReference>
<dbReference type="GO" id="GO:0042482">
    <property type="term" value="P:positive regulation of odontogenesis"/>
    <property type="evidence" value="ECO:0000250"/>
    <property type="project" value="UniProtKB"/>
</dbReference>
<dbReference type="GO" id="GO:0042481">
    <property type="term" value="P:regulation of odontogenesis"/>
    <property type="evidence" value="ECO:0000250"/>
    <property type="project" value="UniProtKB"/>
</dbReference>
<dbReference type="GO" id="GO:0060021">
    <property type="term" value="P:roof of mouth development"/>
    <property type="evidence" value="ECO:0000250"/>
    <property type="project" value="UniProtKB"/>
</dbReference>
<dbReference type="CDD" id="cd00086">
    <property type="entry name" value="homeodomain"/>
    <property type="match status" value="1"/>
</dbReference>
<dbReference type="FunFam" id="1.10.10.60:FF:000134">
    <property type="entry name" value="Homeobox protein MSX-1"/>
    <property type="match status" value="1"/>
</dbReference>
<dbReference type="Gene3D" id="1.10.10.60">
    <property type="entry name" value="Homeodomain-like"/>
    <property type="match status" value="1"/>
</dbReference>
<dbReference type="InterPro" id="IPR001356">
    <property type="entry name" value="HD"/>
</dbReference>
<dbReference type="InterPro" id="IPR020479">
    <property type="entry name" value="HD_metazoa"/>
</dbReference>
<dbReference type="InterPro" id="IPR017970">
    <property type="entry name" value="Homeobox_CS"/>
</dbReference>
<dbReference type="InterPro" id="IPR009057">
    <property type="entry name" value="Homeodomain-like_sf"/>
</dbReference>
<dbReference type="InterPro" id="IPR050674">
    <property type="entry name" value="Msh_Homeobox_Regulators"/>
</dbReference>
<dbReference type="PANTHER" id="PTHR24338">
    <property type="entry name" value="HOMEOBOX PROTEIN MSX"/>
    <property type="match status" value="1"/>
</dbReference>
<dbReference type="PANTHER" id="PTHR24338:SF8">
    <property type="entry name" value="HOMEOBOX PROTEIN MSX-1"/>
    <property type="match status" value="1"/>
</dbReference>
<dbReference type="Pfam" id="PF00046">
    <property type="entry name" value="Homeodomain"/>
    <property type="match status" value="1"/>
</dbReference>
<dbReference type="PRINTS" id="PR00024">
    <property type="entry name" value="HOMEOBOX"/>
</dbReference>
<dbReference type="SMART" id="SM00389">
    <property type="entry name" value="HOX"/>
    <property type="match status" value="1"/>
</dbReference>
<dbReference type="SUPFAM" id="SSF46689">
    <property type="entry name" value="Homeodomain-like"/>
    <property type="match status" value="1"/>
</dbReference>
<dbReference type="PROSITE" id="PS00027">
    <property type="entry name" value="HOMEOBOX_1"/>
    <property type="match status" value="1"/>
</dbReference>
<dbReference type="PROSITE" id="PS50071">
    <property type="entry name" value="HOMEOBOX_2"/>
    <property type="match status" value="1"/>
</dbReference>
<proteinExistence type="inferred from homology"/>
<protein>
    <recommendedName>
        <fullName evidence="5">Homeobox protein MSX-1</fullName>
    </recommendedName>
    <alternativeName>
        <fullName>Msh homeobox 1-like protein</fullName>
    </alternativeName>
</protein>
<keyword id="KW-0217">Developmental protein</keyword>
<keyword id="KW-0238">DNA-binding</keyword>
<keyword id="KW-0371">Homeobox</keyword>
<keyword id="KW-1017">Isopeptide bond</keyword>
<keyword id="KW-0539">Nucleus</keyword>
<keyword id="KW-0678">Repressor</keyword>
<keyword id="KW-0804">Transcription</keyword>
<keyword id="KW-0805">Transcription regulation</keyword>
<keyword id="KW-0832">Ubl conjugation</keyword>
<sequence length="297" mass="31003">MTSLPLGVKVEDSAFGKPAGGGEGQAPSAAAATAAAMGADEEGAKPKVSPSLLPFSVEALMADHRKPGAKESALAASEGAQAAGGSAQPLGVRPGSLGAPDAPSSPRPLGHFSVGGLLKLPEDALVKAESPEKPERTPWMQSPRFSPPPARRLSPPACTLRKHKTNRKPRTPFTTAQLLALERKFRQKQYLSIAERAEFSSSLSLTETQVKIWFQNRRAKAKRLQEAELEKLKMAAKPMLPPAAFGLSFPLGGPAAVAAAAGASLYGASGPFQRAALPVAPVGLYTAHVGYSMYHLT</sequence>
<organism>
    <name type="scientific">Daubentonia madagascariensis</name>
    <name type="common">Aye-aye</name>
    <name type="synonym">Sciurus madagascariensis</name>
    <dbReference type="NCBI Taxonomy" id="31869"/>
    <lineage>
        <taxon>Eukaryota</taxon>
        <taxon>Metazoa</taxon>
        <taxon>Chordata</taxon>
        <taxon>Craniata</taxon>
        <taxon>Vertebrata</taxon>
        <taxon>Euteleostomi</taxon>
        <taxon>Mammalia</taxon>
        <taxon>Eutheria</taxon>
        <taxon>Euarchontoglires</taxon>
        <taxon>Primates</taxon>
        <taxon>Strepsirrhini</taxon>
        <taxon>Chiromyiformes</taxon>
        <taxon>Daubentoniidae</taxon>
        <taxon>Daubentonia</taxon>
    </lineage>
</organism>
<feature type="chain" id="PRO_0000049085" description="Homeobox protein MSX-1">
    <location>
        <begin position="1" status="less than"/>
        <end position="297"/>
    </location>
</feature>
<feature type="DNA-binding region" description="Homeobox" evidence="3">
    <location>
        <begin position="166"/>
        <end position="225"/>
    </location>
</feature>
<feature type="region of interest" description="Disordered" evidence="4">
    <location>
        <begin position="1"/>
        <end position="50"/>
    </location>
</feature>
<feature type="region of interest" description="Disordered" evidence="4">
    <location>
        <begin position="66"/>
        <end position="108"/>
    </location>
</feature>
<feature type="region of interest" description="Disordered" evidence="4">
    <location>
        <begin position="129"/>
        <end position="157"/>
    </location>
</feature>
<feature type="compositionally biased region" description="Low complexity" evidence="4">
    <location>
        <begin position="25"/>
        <end position="38"/>
    </location>
</feature>
<feature type="compositionally biased region" description="Low complexity" evidence="4">
    <location>
        <begin position="71"/>
        <end position="88"/>
    </location>
</feature>
<feature type="cross-link" description="Glycyl lysine isopeptide (Lys-Gly) (interchain with G-Cter in SUMO)" evidence="1">
    <location>
        <position position="9"/>
    </location>
</feature>
<feature type="cross-link" description="Glycyl lysine isopeptide (Lys-Gly) (interchain with G-Cter in SUMO)" evidence="1">
    <location>
        <position position="127"/>
    </location>
</feature>
<feature type="non-terminal residue">
    <location>
        <position position="1"/>
    </location>
</feature>